<reference key="1">
    <citation type="journal article" date="1996" name="Science">
        <title>Complete genome sequence of the methanogenic archaeon, Methanococcus jannaschii.</title>
        <authorList>
            <person name="Bult C.J."/>
            <person name="White O."/>
            <person name="Olsen G.J."/>
            <person name="Zhou L."/>
            <person name="Fleischmann R.D."/>
            <person name="Sutton G.G."/>
            <person name="Blake J.A."/>
            <person name="FitzGerald L.M."/>
            <person name="Clayton R.A."/>
            <person name="Gocayne J.D."/>
            <person name="Kerlavage A.R."/>
            <person name="Dougherty B.A."/>
            <person name="Tomb J.-F."/>
            <person name="Adams M.D."/>
            <person name="Reich C.I."/>
            <person name="Overbeek R."/>
            <person name="Kirkness E.F."/>
            <person name="Weinstock K.G."/>
            <person name="Merrick J.M."/>
            <person name="Glodek A."/>
            <person name="Scott J.L."/>
            <person name="Geoghagen N.S.M."/>
            <person name="Weidman J.F."/>
            <person name="Fuhrmann J.L."/>
            <person name="Nguyen D."/>
            <person name="Utterback T.R."/>
            <person name="Kelley J.M."/>
            <person name="Peterson J.D."/>
            <person name="Sadow P.W."/>
            <person name="Hanna M.C."/>
            <person name="Cotton M.D."/>
            <person name="Roberts K.M."/>
            <person name="Hurst M.A."/>
            <person name="Kaine B.P."/>
            <person name="Borodovsky M."/>
            <person name="Klenk H.-P."/>
            <person name="Fraser C.M."/>
            <person name="Smith H.O."/>
            <person name="Woese C.R."/>
            <person name="Venter J.C."/>
        </authorList>
    </citation>
    <scope>NUCLEOTIDE SEQUENCE [LARGE SCALE GENOMIC DNA]</scope>
    <source>
        <strain>ATCC 43067 / DSM 2661 / JAL-1 / JCM 10045 / NBRC 100440</strain>
    </source>
</reference>
<evidence type="ECO:0000250" key="1"/>
<evidence type="ECO:0000305" key="2"/>
<proteinExistence type="inferred from homology"/>
<organism>
    <name type="scientific">Methanocaldococcus jannaschii (strain ATCC 43067 / DSM 2661 / JAL-1 / JCM 10045 / NBRC 100440)</name>
    <name type="common">Methanococcus jannaschii</name>
    <dbReference type="NCBI Taxonomy" id="243232"/>
    <lineage>
        <taxon>Archaea</taxon>
        <taxon>Methanobacteriati</taxon>
        <taxon>Methanobacteriota</taxon>
        <taxon>Methanomada group</taxon>
        <taxon>Methanococci</taxon>
        <taxon>Methanococcales</taxon>
        <taxon>Methanocaldococcaceae</taxon>
        <taxon>Methanocaldococcus</taxon>
    </lineage>
</organism>
<dbReference type="EC" id="3.7.1.12"/>
<dbReference type="EMBL" id="L77117">
    <property type="protein sequence ID" value="AAB99144.1"/>
    <property type="molecule type" value="Genomic_DNA"/>
</dbReference>
<dbReference type="PIR" id="G64442">
    <property type="entry name" value="G64442"/>
</dbReference>
<dbReference type="SMR" id="Q58544"/>
<dbReference type="FunCoup" id="Q58544">
    <property type="interactions" value="110"/>
</dbReference>
<dbReference type="STRING" id="243232.MJ_1144"/>
<dbReference type="PaxDb" id="243232-MJ_1144"/>
<dbReference type="EnsemblBacteria" id="AAB99144">
    <property type="protein sequence ID" value="AAB99144"/>
    <property type="gene ID" value="MJ_1144"/>
</dbReference>
<dbReference type="KEGG" id="mja:MJ_1144"/>
<dbReference type="eggNOG" id="arCOG00651">
    <property type="taxonomic scope" value="Archaea"/>
</dbReference>
<dbReference type="HOGENOM" id="CLU_028397_0_0_2"/>
<dbReference type="InParanoid" id="Q58544"/>
<dbReference type="PhylomeDB" id="Q58544"/>
<dbReference type="UniPathway" id="UPA00148">
    <property type="reaction ID" value="UER00561"/>
</dbReference>
<dbReference type="Proteomes" id="UP000000805">
    <property type="component" value="Chromosome"/>
</dbReference>
<dbReference type="GO" id="GO:0043779">
    <property type="term" value="F:cobalt-precorrin-5A acetaldehyde-lyase activity"/>
    <property type="evidence" value="ECO:0007669"/>
    <property type="project" value="UniProtKB-EC"/>
</dbReference>
<dbReference type="GO" id="GO:0009236">
    <property type="term" value="P:cobalamin biosynthetic process"/>
    <property type="evidence" value="ECO:0007669"/>
    <property type="project" value="UniProtKB-UniPathway"/>
</dbReference>
<dbReference type="Gene3D" id="3.40.50.11220">
    <property type="match status" value="1"/>
</dbReference>
<dbReference type="Gene3D" id="3.30.420.180">
    <property type="entry name" value="CobE/GbiG C-terminal domain"/>
    <property type="match status" value="1"/>
</dbReference>
<dbReference type="InterPro" id="IPR052553">
    <property type="entry name" value="CbiG_hydrolase"/>
</dbReference>
<dbReference type="InterPro" id="IPR021744">
    <property type="entry name" value="CbiG_N"/>
</dbReference>
<dbReference type="InterPro" id="IPR002750">
    <property type="entry name" value="CobE/GbiG_C"/>
</dbReference>
<dbReference type="InterPro" id="IPR036518">
    <property type="entry name" value="CobE/GbiG_C_sf"/>
</dbReference>
<dbReference type="InterPro" id="IPR038029">
    <property type="entry name" value="GbiG_N_sf"/>
</dbReference>
<dbReference type="PANTHER" id="PTHR37477">
    <property type="entry name" value="COBALT-PRECORRIN-5A HYDROLASE"/>
    <property type="match status" value="1"/>
</dbReference>
<dbReference type="PANTHER" id="PTHR37477:SF1">
    <property type="entry name" value="COBALT-PRECORRIN-5A HYDROLASE"/>
    <property type="match status" value="1"/>
</dbReference>
<dbReference type="Pfam" id="PF01890">
    <property type="entry name" value="CbiG_C"/>
    <property type="match status" value="1"/>
</dbReference>
<dbReference type="Pfam" id="PF11760">
    <property type="entry name" value="CbiG_N"/>
    <property type="match status" value="1"/>
</dbReference>
<dbReference type="SUPFAM" id="SSF159672">
    <property type="entry name" value="CbiG N-terminal domain-like"/>
    <property type="match status" value="1"/>
</dbReference>
<dbReference type="SUPFAM" id="SSF159664">
    <property type="entry name" value="CobE/GbiG C-terminal domain-like"/>
    <property type="match status" value="1"/>
</dbReference>
<feature type="chain" id="PRO_0000107187" description="Probable cobalt-precorrin-5A hydrolase">
    <location>
        <begin position="1"/>
        <end position="323"/>
    </location>
</feature>
<protein>
    <recommendedName>
        <fullName>Probable cobalt-precorrin-5A hydrolase</fullName>
        <ecNumber>3.7.1.12</ecNumber>
    </recommendedName>
</protein>
<accession>Q58544</accession>
<comment type="function">
    <text evidence="1">Catalyzes the hydrolysis of the ring A acetate delta-lactone of cobalt-precorrin-5A resulting in the loss of the C-20 carbon and its attached methyl group in the form of acetaldehyde.</text>
</comment>
<comment type="catalytic activity">
    <reaction>
        <text>Co-precorrin-5A + H2O = Co-precorrin-5B + acetaldehyde + H(+)</text>
        <dbReference type="Rhea" id="RHEA:26281"/>
        <dbReference type="ChEBI" id="CHEBI:15343"/>
        <dbReference type="ChEBI" id="CHEBI:15377"/>
        <dbReference type="ChEBI" id="CHEBI:15378"/>
        <dbReference type="ChEBI" id="CHEBI:60062"/>
        <dbReference type="ChEBI" id="CHEBI:60063"/>
        <dbReference type="EC" id="3.7.1.12"/>
    </reaction>
</comment>
<comment type="pathway">
    <text>Cofactor biosynthesis; adenosylcobalamin biosynthesis; cob(II)yrinate a,c-diamide from sirohydrochlorin (anaerobic route): step 5/10.</text>
</comment>
<comment type="similarity">
    <text evidence="2">Belongs to the CbiG family.</text>
</comment>
<gene>
    <name type="primary">cbiG</name>
    <name type="ordered locus">MJ1144</name>
</gene>
<keyword id="KW-0169">Cobalamin biosynthesis</keyword>
<keyword id="KW-0378">Hydrolase</keyword>
<keyword id="KW-1185">Reference proteome</keyword>
<name>CBIG_METJA</name>
<sequence>MMIKIVYITKRGKKIAEEIKDVLDYYHYDNKVEPIKDFKIERNEGGFIFIMATGIVLRKFLDEIKNDKFKDPFVIICNENKELIPILSNHLGGGNYFSKLIANNINGRVIFTTATDVNGKVGIDELSKMLFLETPKRKHILDINKKILEEDVSLTLPKYWKLRNLNGYKISYHDKYEVVVDDSIRLKPLKIAVGLGARKGIERYKVYWAVKKALFLRNIPVWRVDAFATIEDKKHERGILETVNKFKKPLIIFKREEINEIYEKIDLEKSEFVYKHLGVYGVSEPASILAVKKLTNKDFDSIKLILKKFKRNGVTVAIATENL</sequence>